<protein>
    <recommendedName>
        <fullName>Olfactory receptor 2AP1</fullName>
    </recommendedName>
    <alternativeName>
        <fullName>Olfactory receptor OR12-9</fullName>
    </alternativeName>
</protein>
<keyword id="KW-1003">Cell membrane</keyword>
<keyword id="KW-1015">Disulfide bond</keyword>
<keyword id="KW-0297">G-protein coupled receptor</keyword>
<keyword id="KW-0325">Glycoprotein</keyword>
<keyword id="KW-0472">Membrane</keyword>
<keyword id="KW-0552">Olfaction</keyword>
<keyword id="KW-0675">Receptor</keyword>
<keyword id="KW-1185">Reference proteome</keyword>
<keyword id="KW-0716">Sensory transduction</keyword>
<keyword id="KW-0807">Transducer</keyword>
<keyword id="KW-0812">Transmembrane</keyword>
<keyword id="KW-1133">Transmembrane helix</keyword>
<name>O2AP1_HUMAN</name>
<accession>Q8NGE2</accession>
<feature type="chain" id="PRO_0000150475" description="Olfactory receptor 2AP1">
    <location>
        <begin position="1"/>
        <end position="309"/>
    </location>
</feature>
<feature type="topological domain" description="Extracellular" evidence="1">
    <location>
        <begin position="1"/>
        <end position="23"/>
    </location>
</feature>
<feature type="transmembrane region" description="Helical; Name=1" evidence="1">
    <location>
        <begin position="24"/>
        <end position="47"/>
    </location>
</feature>
<feature type="topological domain" description="Cytoplasmic" evidence="1">
    <location>
        <begin position="48"/>
        <end position="55"/>
    </location>
</feature>
<feature type="transmembrane region" description="Helical; Name=2" evidence="1">
    <location>
        <begin position="56"/>
        <end position="77"/>
    </location>
</feature>
<feature type="topological domain" description="Extracellular" evidence="1">
    <location>
        <begin position="78"/>
        <end position="98"/>
    </location>
</feature>
<feature type="transmembrane region" description="Helical; Name=3" evidence="1">
    <location>
        <begin position="99"/>
        <end position="118"/>
    </location>
</feature>
<feature type="topological domain" description="Cytoplasmic" evidence="1">
    <location>
        <begin position="119"/>
        <end position="137"/>
    </location>
</feature>
<feature type="transmembrane region" description="Helical; Name=4" evidence="1">
    <location>
        <begin position="138"/>
        <end position="156"/>
    </location>
</feature>
<feature type="topological domain" description="Extracellular" evidence="1">
    <location>
        <begin position="157"/>
        <end position="193"/>
    </location>
</feature>
<feature type="transmembrane region" description="Helical; Name=5" evidence="1">
    <location>
        <begin position="194"/>
        <end position="217"/>
    </location>
</feature>
<feature type="topological domain" description="Cytoplasmic" evidence="1">
    <location>
        <begin position="218"/>
        <end position="234"/>
    </location>
</feature>
<feature type="transmembrane region" description="Helical; Name=6" evidence="1">
    <location>
        <begin position="235"/>
        <end position="257"/>
    </location>
</feature>
<feature type="topological domain" description="Extracellular" evidence="1">
    <location>
        <begin position="258"/>
        <end position="270"/>
    </location>
</feature>
<feature type="transmembrane region" description="Helical; Name=7" evidence="1">
    <location>
        <begin position="271"/>
        <end position="290"/>
    </location>
</feature>
<feature type="topological domain" description="Cytoplasmic" evidence="1">
    <location>
        <begin position="291"/>
        <end position="309"/>
    </location>
</feature>
<feature type="glycosylation site" description="N-linked (GlcNAc...) asparagine" evidence="1">
    <location>
        <position position="3"/>
    </location>
</feature>
<feature type="glycosylation site" description="N-linked (GlcNAc...) asparagine" evidence="1">
    <location>
        <position position="87"/>
    </location>
</feature>
<feature type="disulfide bond" evidence="2">
    <location>
        <begin position="95"/>
        <end position="187"/>
    </location>
</feature>
<gene>
    <name type="primary">OR2AP1</name>
    <name type="synonym">OR2AP1P</name>
</gene>
<sequence>MKNKTVLTEFILLGLTDVPELQVAVFTFLFLAYLLSILGNLTILILTLLDSHLQTPMYFFLRNFSFLEISFTNIFIPRVLISITTGNKSISFAGCFTQYFFAMFLGATEFYLLAAMSYDRYVAICKPLHYTTIMSSRICIQLIFCSWLGGLMAIIPTITLMSQQDFCASNRLNHYFCDYEPLLELSCSDTSLIEKVVFLVASVTLVVTLVLVILSYAFIIKTILKLPSAQQRTKAFSTCSSHMIVISLSYGSCMFMYINPSAKEGDTFNKGVALLITSVAPLLNPFIYTLRNQQVKQPFKDMVKKLLNL</sequence>
<dbReference type="EMBL" id="AB065868">
    <property type="protein sequence ID" value="BAC06086.1"/>
    <property type="molecule type" value="Genomic_DNA"/>
</dbReference>
<dbReference type="EMBL" id="BK004260">
    <property type="protein sequence ID" value="DAA04658.1"/>
    <property type="molecule type" value="Genomic_DNA"/>
</dbReference>
<dbReference type="CCDS" id="CCDS58241.1"/>
<dbReference type="RefSeq" id="NP_001245214.1">
    <property type="nucleotide sequence ID" value="NM_001258285.2"/>
</dbReference>
<dbReference type="SMR" id="Q8NGE2"/>
<dbReference type="FunCoup" id="Q8NGE2">
    <property type="interactions" value="416"/>
</dbReference>
<dbReference type="STRING" id="9606.ENSP00000493043"/>
<dbReference type="GlyCosmos" id="Q8NGE2">
    <property type="glycosylation" value="2 sites, No reported glycans"/>
</dbReference>
<dbReference type="GlyGen" id="Q8NGE2">
    <property type="glycosylation" value="2 sites"/>
</dbReference>
<dbReference type="BioMuta" id="OR2AP1"/>
<dbReference type="DMDM" id="74760248"/>
<dbReference type="jPOST" id="Q8NGE2"/>
<dbReference type="MassIVE" id="Q8NGE2"/>
<dbReference type="PaxDb" id="9606-ENSP00000323423"/>
<dbReference type="Antibodypedia" id="63427">
    <property type="antibodies" value="38 antibodies from 15 providers"/>
</dbReference>
<dbReference type="DNASU" id="121129"/>
<dbReference type="Ensembl" id="ENST00000641114.1">
    <property type="protein sequence ID" value="ENSP00000493043.1"/>
    <property type="gene ID" value="ENSG00000179615.3"/>
</dbReference>
<dbReference type="GeneID" id="121129"/>
<dbReference type="KEGG" id="hsa:121129"/>
<dbReference type="MANE-Select" id="ENST00000641114.1">
    <property type="protein sequence ID" value="ENSP00000493043.1"/>
    <property type="RefSeq nucleotide sequence ID" value="NM_001258285.2"/>
    <property type="RefSeq protein sequence ID" value="NP_001245214.1"/>
</dbReference>
<dbReference type="UCSC" id="uc031qhr.1">
    <property type="organism name" value="human"/>
</dbReference>
<dbReference type="AGR" id="HGNC:15335"/>
<dbReference type="CTD" id="121129"/>
<dbReference type="DisGeNET" id="121129"/>
<dbReference type="GeneCards" id="OR2AP1"/>
<dbReference type="HGNC" id="HGNC:15335">
    <property type="gene designation" value="OR2AP1"/>
</dbReference>
<dbReference type="HPA" id="ENSG00000179615">
    <property type="expression patterns" value="Not detected"/>
</dbReference>
<dbReference type="neXtProt" id="NX_Q8NGE2"/>
<dbReference type="OpenTargets" id="ENSG00000179615"/>
<dbReference type="VEuPathDB" id="HostDB:ENSG00000179615"/>
<dbReference type="eggNOG" id="ENOG502QVH7">
    <property type="taxonomic scope" value="Eukaryota"/>
</dbReference>
<dbReference type="GeneTree" id="ENSGT01130000278269"/>
<dbReference type="HOGENOM" id="CLU_012526_1_1_1"/>
<dbReference type="InParanoid" id="Q8NGE2"/>
<dbReference type="OMA" id="GTFNKGV"/>
<dbReference type="OrthoDB" id="9902777at2759"/>
<dbReference type="PAN-GO" id="Q8NGE2">
    <property type="GO annotations" value="1 GO annotation based on evolutionary models"/>
</dbReference>
<dbReference type="PhylomeDB" id="Q8NGE2"/>
<dbReference type="TreeFam" id="TF336833"/>
<dbReference type="PathwayCommons" id="Q8NGE2"/>
<dbReference type="Reactome" id="R-HSA-9752946">
    <property type="pathway name" value="Expression and translocation of olfactory receptors"/>
</dbReference>
<dbReference type="BioGRID-ORCS" id="121129">
    <property type="hits" value="6 hits in 737 CRISPR screens"/>
</dbReference>
<dbReference type="GeneWiki" id="OR2AP1"/>
<dbReference type="GenomeRNAi" id="121129"/>
<dbReference type="Pharos" id="Q8NGE2">
    <property type="development level" value="Tdark"/>
</dbReference>
<dbReference type="PRO" id="PR:Q8NGE2"/>
<dbReference type="Proteomes" id="UP000005640">
    <property type="component" value="Chromosome 12"/>
</dbReference>
<dbReference type="RNAct" id="Q8NGE2">
    <property type="molecule type" value="protein"/>
</dbReference>
<dbReference type="Bgee" id="ENSG00000179615">
    <property type="expression patterns" value="Expressed in male germ line stem cell (sensu Vertebrata) in testis"/>
</dbReference>
<dbReference type="ExpressionAtlas" id="Q8NGE2">
    <property type="expression patterns" value="baseline and differential"/>
</dbReference>
<dbReference type="GO" id="GO:0005886">
    <property type="term" value="C:plasma membrane"/>
    <property type="evidence" value="ECO:0007669"/>
    <property type="project" value="UniProtKB-SubCell"/>
</dbReference>
<dbReference type="GO" id="GO:0004930">
    <property type="term" value="F:G protein-coupled receptor activity"/>
    <property type="evidence" value="ECO:0007669"/>
    <property type="project" value="UniProtKB-KW"/>
</dbReference>
<dbReference type="GO" id="GO:0004984">
    <property type="term" value="F:olfactory receptor activity"/>
    <property type="evidence" value="ECO:0000318"/>
    <property type="project" value="GO_Central"/>
</dbReference>
<dbReference type="CDD" id="cd15912">
    <property type="entry name" value="7tmA_OR6C-like"/>
    <property type="match status" value="1"/>
</dbReference>
<dbReference type="FunFam" id="1.20.1070.10:FF:000013">
    <property type="entry name" value="Olfactory receptor"/>
    <property type="match status" value="1"/>
</dbReference>
<dbReference type="Gene3D" id="1.20.1070.10">
    <property type="entry name" value="Rhodopsin 7-helix transmembrane proteins"/>
    <property type="match status" value="1"/>
</dbReference>
<dbReference type="InterPro" id="IPR000276">
    <property type="entry name" value="GPCR_Rhodpsn"/>
</dbReference>
<dbReference type="InterPro" id="IPR017452">
    <property type="entry name" value="GPCR_Rhodpsn_7TM"/>
</dbReference>
<dbReference type="InterPro" id="IPR000725">
    <property type="entry name" value="Olfact_rcpt"/>
</dbReference>
<dbReference type="InterPro" id="IPR047132">
    <property type="entry name" value="Olfact_rcpt_6C-like"/>
</dbReference>
<dbReference type="PANTHER" id="PTHR26454">
    <property type="entry name" value="OLFACTORY RECEPTOR"/>
    <property type="match status" value="1"/>
</dbReference>
<dbReference type="PANTHER" id="PTHR26454:SF16">
    <property type="entry name" value="OLFACTORY RECEPTOR 2AP1"/>
    <property type="match status" value="1"/>
</dbReference>
<dbReference type="Pfam" id="PF13853">
    <property type="entry name" value="7tm_4"/>
    <property type="match status" value="1"/>
</dbReference>
<dbReference type="PRINTS" id="PR00237">
    <property type="entry name" value="GPCRRHODOPSN"/>
</dbReference>
<dbReference type="PRINTS" id="PR00245">
    <property type="entry name" value="OLFACTORYR"/>
</dbReference>
<dbReference type="SUPFAM" id="SSF81321">
    <property type="entry name" value="Family A G protein-coupled receptor-like"/>
    <property type="match status" value="1"/>
</dbReference>
<dbReference type="PROSITE" id="PS00237">
    <property type="entry name" value="G_PROTEIN_RECEP_F1_1"/>
    <property type="match status" value="1"/>
</dbReference>
<dbReference type="PROSITE" id="PS50262">
    <property type="entry name" value="G_PROTEIN_RECEP_F1_2"/>
    <property type="match status" value="1"/>
</dbReference>
<proteinExistence type="inferred from homology"/>
<organism>
    <name type="scientific">Homo sapiens</name>
    <name type="common">Human</name>
    <dbReference type="NCBI Taxonomy" id="9606"/>
    <lineage>
        <taxon>Eukaryota</taxon>
        <taxon>Metazoa</taxon>
        <taxon>Chordata</taxon>
        <taxon>Craniata</taxon>
        <taxon>Vertebrata</taxon>
        <taxon>Euteleostomi</taxon>
        <taxon>Mammalia</taxon>
        <taxon>Eutheria</taxon>
        <taxon>Euarchontoglires</taxon>
        <taxon>Primates</taxon>
        <taxon>Haplorrhini</taxon>
        <taxon>Catarrhini</taxon>
        <taxon>Hominidae</taxon>
        <taxon>Homo</taxon>
    </lineage>
</organism>
<comment type="function">
    <text evidence="3">Odorant receptor.</text>
</comment>
<comment type="subcellular location">
    <subcellularLocation>
        <location>Cell membrane</location>
        <topology>Multi-pass membrane protein</topology>
    </subcellularLocation>
</comment>
<comment type="similarity">
    <text evidence="2">Belongs to the G-protein coupled receptor 1 family.</text>
</comment>
<comment type="online information" name="Human Olfactory Receptor Data Exploratorium (HORDE)">
    <link uri="http://genome.weizmann.ac.il/horde/card/index/symbol:OR2AP1"/>
</comment>
<evidence type="ECO:0000255" key="1"/>
<evidence type="ECO:0000255" key="2">
    <source>
        <dbReference type="PROSITE-ProRule" id="PRU00521"/>
    </source>
</evidence>
<evidence type="ECO:0000305" key="3"/>
<reference key="1">
    <citation type="submission" date="2001-07" db="EMBL/GenBank/DDBJ databases">
        <title>Genome-wide discovery and analysis of human seven transmembrane helix receptor genes.</title>
        <authorList>
            <person name="Suwa M."/>
            <person name="Sato T."/>
            <person name="Okouchi I."/>
            <person name="Arita M."/>
            <person name="Futami K."/>
            <person name="Matsumoto S."/>
            <person name="Tsutsumi S."/>
            <person name="Aburatani H."/>
            <person name="Asai K."/>
            <person name="Akiyama Y."/>
        </authorList>
    </citation>
    <scope>NUCLEOTIDE SEQUENCE [GENOMIC DNA]</scope>
</reference>
<reference key="2">
    <citation type="journal article" date="2004" name="Proc. Natl. Acad. Sci. U.S.A.">
        <title>The human olfactory receptor gene family.</title>
        <authorList>
            <person name="Malnic B."/>
            <person name="Godfrey P.A."/>
            <person name="Buck L.B."/>
        </authorList>
    </citation>
    <scope>IDENTIFICATION</scope>
</reference>
<reference key="3">
    <citation type="journal article" date="2004" name="Proc. Natl. Acad. Sci. U.S.A.">
        <authorList>
            <person name="Malnic B."/>
            <person name="Godfrey P.A."/>
            <person name="Buck L.B."/>
        </authorList>
    </citation>
    <scope>ERRATUM OF PUBMED:14983052</scope>
</reference>